<organism>
    <name type="scientific">Rattus norvegicus</name>
    <name type="common">Rat</name>
    <dbReference type="NCBI Taxonomy" id="10116"/>
    <lineage>
        <taxon>Eukaryota</taxon>
        <taxon>Metazoa</taxon>
        <taxon>Chordata</taxon>
        <taxon>Craniata</taxon>
        <taxon>Vertebrata</taxon>
        <taxon>Euteleostomi</taxon>
        <taxon>Mammalia</taxon>
        <taxon>Eutheria</taxon>
        <taxon>Euarchontoglires</taxon>
        <taxon>Glires</taxon>
        <taxon>Rodentia</taxon>
        <taxon>Myomorpha</taxon>
        <taxon>Muroidea</taxon>
        <taxon>Muridae</taxon>
        <taxon>Murinae</taxon>
        <taxon>Rattus</taxon>
    </lineage>
</organism>
<comment type="function">
    <text evidence="1">Epidermis-specific type I keratin involved in wound healing. Involved in the activation of follicular keratinocytes after wounding, while it does not play a major role in keratinocyte proliferation or migration. Participates in the regulation of epithelial migration by inhibiting the activity of SRC during wound repair.</text>
</comment>
<comment type="subunit">
    <text evidence="1">Heterodimer of a type I and a type II keratin. KRT6 isomers associate with KRT16 and/or KRT17. Interacts with TCHP.</text>
</comment>
<comment type="miscellaneous">
    <text>There are two types of cytoskeletal and microfibrillar keratin, I (acidic) and II (neutral to basic) (40-55 and 56-70 kDa, respectively).</text>
</comment>
<comment type="miscellaneous">
    <text>There are at least six isoforms of human type II keratin-6 (K6), K6A being the most abundant representing about 77% of all forms found in epithelia.</text>
</comment>
<comment type="similarity">
    <text evidence="2">Belongs to the intermediate filament family.</text>
</comment>
<sequence>MSTKTVIRSQTSHRGFSAGSARLPGLNRSGFSSVSVCRSRGSGGSRAVCGGAGFGSRSLCGVGSSQRISIGGGSCGIGGGYGGRFGGSFGYGGGAGGSLGFGAGAGFGGGYGGAGFPVCPPGGIQEVTINQSLLTPMNLQIDPTIQRVRTEEREQIKTLNNKFASFIDKVRFLEQQNKVLDTKWALLQEQGTKTVRQGLETLFEQYINDLRKELDNILGQRGRLDSELRNMQGTVEDYKSKYEDEINRRTAAENEFVTLKKDVDAAYMNKVELQAKADSLTDEINFLRALYEAELSQMQTHISDTSVVLSMDNNRSLDLDSIIAEVKAQYEEIAKRSRAEAESWYQTKYEELQITAGRHGDDLRNTKQEISEINRMIQRLRSEIDHVKKQIANLQAAIAEAEQRGEMALKDARGKLEGLEDALQKAKQDMARLLKEYQDLMNVKLALDVEIATYRTLLEGEECRLNGEGVGPVNISVVQSTVSSSYGSAGGASSSIGLGGSSSFSYGGSHSIGGGFSAGSGRGISSGLSSSGGSSSTIKYTTTSSTRKSYRP</sequence>
<accession>Q4FZU2</accession>
<gene>
    <name type="primary">Krt6a</name>
</gene>
<proteinExistence type="evidence at protein level"/>
<feature type="chain" id="PRO_0000288714" description="Keratin, type II cytoskeletal 6A">
    <location>
        <begin position="1"/>
        <end position="552"/>
    </location>
</feature>
<feature type="domain" description="IF rod" evidence="2">
    <location>
        <begin position="152"/>
        <end position="465"/>
    </location>
</feature>
<feature type="region of interest" description="Head">
    <location>
        <begin position="1"/>
        <end position="151"/>
    </location>
</feature>
<feature type="region of interest" description="Disordered" evidence="3">
    <location>
        <begin position="1"/>
        <end position="21"/>
    </location>
</feature>
<feature type="region of interest" description="Coil 1A">
    <location>
        <begin position="152"/>
        <end position="187"/>
    </location>
</feature>
<feature type="region of interest" description="Linker 1">
    <location>
        <begin position="188"/>
        <end position="206"/>
    </location>
</feature>
<feature type="region of interest" description="Coil 1B">
    <location>
        <begin position="207"/>
        <end position="298"/>
    </location>
</feature>
<feature type="region of interest" description="Linker 12">
    <location>
        <begin position="299"/>
        <end position="322"/>
    </location>
</feature>
<feature type="region of interest" description="Coil 2">
    <location>
        <begin position="323"/>
        <end position="461"/>
    </location>
</feature>
<feature type="region of interest" description="Tail">
    <location>
        <begin position="462"/>
        <end position="552"/>
    </location>
</feature>
<feature type="region of interest" description="Disordered" evidence="3">
    <location>
        <begin position="524"/>
        <end position="552"/>
    </location>
</feature>
<feature type="compositionally biased region" description="Polar residues" evidence="3">
    <location>
        <begin position="1"/>
        <end position="14"/>
    </location>
</feature>
<feature type="compositionally biased region" description="Low complexity" evidence="3">
    <location>
        <begin position="525"/>
        <end position="552"/>
    </location>
</feature>
<feature type="site" description="Stutter">
    <location>
        <position position="403"/>
    </location>
</feature>
<name>K2C6A_RAT</name>
<keyword id="KW-0175">Coiled coil</keyword>
<keyword id="KW-0903">Direct protein sequencing</keyword>
<keyword id="KW-0403">Intermediate filament</keyword>
<keyword id="KW-0416">Keratin</keyword>
<keyword id="KW-1185">Reference proteome</keyword>
<evidence type="ECO:0000250" key="1">
    <source>
        <dbReference type="UniProtKB" id="P50446"/>
    </source>
</evidence>
<evidence type="ECO:0000255" key="2">
    <source>
        <dbReference type="PROSITE-ProRule" id="PRU01188"/>
    </source>
</evidence>
<evidence type="ECO:0000256" key="3">
    <source>
        <dbReference type="SAM" id="MobiDB-lite"/>
    </source>
</evidence>
<protein>
    <recommendedName>
        <fullName>Keratin, type II cytoskeletal 6A</fullName>
    </recommendedName>
    <alternativeName>
        <fullName>Cytokeratin-6A</fullName>
        <shortName>CK-6A</shortName>
    </alternativeName>
    <alternativeName>
        <fullName>Keratin-6A</fullName>
        <shortName>K6A</shortName>
    </alternativeName>
    <alternativeName>
        <fullName>Type-II keratin Kb6</fullName>
    </alternativeName>
</protein>
<reference key="1">
    <citation type="journal article" date="2004" name="Genome Res.">
        <title>The status, quality, and expansion of the NIH full-length cDNA project: the Mammalian Gene Collection (MGC).</title>
        <authorList>
            <consortium name="The MGC Project Team"/>
        </authorList>
    </citation>
    <scope>NUCLEOTIDE SEQUENCE [LARGE SCALE MRNA]</scope>
    <source>
        <tissue>Placenta</tissue>
    </source>
</reference>
<reference key="2">
    <citation type="submission" date="2007-09" db="UniProtKB">
        <authorList>
            <person name="Lubec G."/>
            <person name="Diao W."/>
            <person name="Kang S.U."/>
            <person name="Lubec S."/>
        </authorList>
    </citation>
    <scope>PROTEIN SEQUENCE OF 163-169; 316-336; 349-358; 445-455 AND 523-548</scope>
    <scope>IDENTIFICATION BY MASS SPECTROMETRY</scope>
    <source>
        <strain>Sprague-Dawley</strain>
        <tissue>Brain</tissue>
        <tissue>Hippocampus</tissue>
    </source>
</reference>
<dbReference type="EMBL" id="BC099121">
    <property type="protein sequence ID" value="AAH99121.1"/>
    <property type="molecule type" value="mRNA"/>
</dbReference>
<dbReference type="RefSeq" id="NP_001094477.1">
    <property type="nucleotide sequence ID" value="NM_001101007.1"/>
</dbReference>
<dbReference type="SMR" id="Q4FZU2"/>
<dbReference type="BioGRID" id="598219">
    <property type="interactions" value="1"/>
</dbReference>
<dbReference type="FunCoup" id="Q4FZU2">
    <property type="interactions" value="48"/>
</dbReference>
<dbReference type="STRING" id="10116.ENSRNOP00000069086"/>
<dbReference type="GlyGen" id="Q4FZU2">
    <property type="glycosylation" value="1 site, 1 O-linked glycan (1 site)"/>
</dbReference>
<dbReference type="iPTMnet" id="Q4FZU2"/>
<dbReference type="PhosphoSitePlus" id="Q4FZU2"/>
<dbReference type="Ensembl" id="ENSRNOT00000102479.1">
    <property type="protein sequence ID" value="ENSRNOP00000087976.1"/>
    <property type="gene ID" value="ENSRNOG00000070470.1"/>
</dbReference>
<dbReference type="GeneID" id="683313"/>
<dbReference type="KEGG" id="rno:683313"/>
<dbReference type="AGR" id="RGD:1588056"/>
<dbReference type="CTD" id="286887"/>
<dbReference type="RGD" id="1588056">
    <property type="gene designation" value="LOC683313"/>
</dbReference>
<dbReference type="GeneTree" id="ENSGT00940000154600"/>
<dbReference type="InParanoid" id="Q4FZU2"/>
<dbReference type="OMA" id="SELSHMI"/>
<dbReference type="OrthoDB" id="85473at9989"/>
<dbReference type="PhylomeDB" id="Q4FZU2"/>
<dbReference type="Reactome" id="R-RNO-6805567">
    <property type="pathway name" value="Keratinization"/>
</dbReference>
<dbReference type="Reactome" id="R-RNO-6809371">
    <property type="pathway name" value="Formation of the cornified envelope"/>
</dbReference>
<dbReference type="PRO" id="PR:Q4FZU2"/>
<dbReference type="Proteomes" id="UP000002494">
    <property type="component" value="Chromosome 7"/>
</dbReference>
<dbReference type="GO" id="GO:0045095">
    <property type="term" value="C:keratin filament"/>
    <property type="evidence" value="ECO:0000318"/>
    <property type="project" value="GO_Central"/>
</dbReference>
<dbReference type="GO" id="GO:0030280">
    <property type="term" value="F:structural constituent of skin epidermis"/>
    <property type="evidence" value="ECO:0000318"/>
    <property type="project" value="GO_Central"/>
</dbReference>
<dbReference type="GO" id="GO:0045104">
    <property type="term" value="P:intermediate filament cytoskeleton organization"/>
    <property type="evidence" value="ECO:0000266"/>
    <property type="project" value="RGD"/>
</dbReference>
<dbReference type="GO" id="GO:0045109">
    <property type="term" value="P:intermediate filament organization"/>
    <property type="evidence" value="ECO:0000318"/>
    <property type="project" value="GO_Central"/>
</dbReference>
<dbReference type="GO" id="GO:0031424">
    <property type="term" value="P:keratinization"/>
    <property type="evidence" value="ECO:0000318"/>
    <property type="project" value="GO_Central"/>
</dbReference>
<dbReference type="GO" id="GO:0002009">
    <property type="term" value="P:morphogenesis of an epithelium"/>
    <property type="evidence" value="ECO:0000250"/>
    <property type="project" value="UniProtKB"/>
</dbReference>
<dbReference type="GO" id="GO:0042060">
    <property type="term" value="P:wound healing"/>
    <property type="evidence" value="ECO:0000250"/>
    <property type="project" value="UniProtKB"/>
</dbReference>
<dbReference type="FunFam" id="1.20.5.1160:FF:000001">
    <property type="entry name" value="Keratin type II"/>
    <property type="match status" value="1"/>
</dbReference>
<dbReference type="FunFam" id="1.20.5.170:FF:000004">
    <property type="entry name" value="Keratin, type II cytoskeletal 5"/>
    <property type="match status" value="1"/>
</dbReference>
<dbReference type="FunFam" id="1.20.5.500:FF:000001">
    <property type="entry name" value="Type II keratin 23"/>
    <property type="match status" value="1"/>
</dbReference>
<dbReference type="Gene3D" id="1.20.5.170">
    <property type="match status" value="1"/>
</dbReference>
<dbReference type="Gene3D" id="1.20.5.500">
    <property type="entry name" value="Single helix bin"/>
    <property type="match status" value="1"/>
</dbReference>
<dbReference type="Gene3D" id="1.20.5.1160">
    <property type="entry name" value="Vasodilator-stimulated phosphoprotein"/>
    <property type="match status" value="1"/>
</dbReference>
<dbReference type="InterPro" id="IPR018039">
    <property type="entry name" value="IF_conserved"/>
</dbReference>
<dbReference type="InterPro" id="IPR039008">
    <property type="entry name" value="IF_rod_dom"/>
</dbReference>
<dbReference type="InterPro" id="IPR032444">
    <property type="entry name" value="Keratin_2_head"/>
</dbReference>
<dbReference type="InterPro" id="IPR003054">
    <property type="entry name" value="Keratin_II"/>
</dbReference>
<dbReference type="PANTHER" id="PTHR45616">
    <property type="entry name" value="GATA-TYPE DOMAIN-CONTAINING PROTEIN"/>
    <property type="match status" value="1"/>
</dbReference>
<dbReference type="PANTHER" id="PTHR45616:SF39">
    <property type="entry name" value="KERATIN, TYPE II CYTOSKELETAL 6A-RELATED"/>
    <property type="match status" value="1"/>
</dbReference>
<dbReference type="Pfam" id="PF00038">
    <property type="entry name" value="Filament"/>
    <property type="match status" value="1"/>
</dbReference>
<dbReference type="Pfam" id="PF16208">
    <property type="entry name" value="Keratin_2_head"/>
    <property type="match status" value="1"/>
</dbReference>
<dbReference type="PRINTS" id="PR01276">
    <property type="entry name" value="TYPE2KERATIN"/>
</dbReference>
<dbReference type="SMART" id="SM01391">
    <property type="entry name" value="Filament"/>
    <property type="match status" value="1"/>
</dbReference>
<dbReference type="SUPFAM" id="SSF64593">
    <property type="entry name" value="Intermediate filament protein, coiled coil region"/>
    <property type="match status" value="3"/>
</dbReference>
<dbReference type="PROSITE" id="PS00226">
    <property type="entry name" value="IF_ROD_1"/>
    <property type="match status" value="1"/>
</dbReference>
<dbReference type="PROSITE" id="PS51842">
    <property type="entry name" value="IF_ROD_2"/>
    <property type="match status" value="1"/>
</dbReference>